<accession>A8Y9G0</accession>
<keyword id="KW-0150">Chloroplast</keyword>
<keyword id="KW-0240">DNA-directed RNA polymerase</keyword>
<keyword id="KW-0548">Nucleotidyltransferase</keyword>
<keyword id="KW-0934">Plastid</keyword>
<keyword id="KW-0804">Transcription</keyword>
<keyword id="KW-0808">Transferase</keyword>
<comment type="function">
    <text evidence="1">DNA-dependent RNA polymerase catalyzes the transcription of DNA into RNA using the four ribonucleoside triphosphates as substrates.</text>
</comment>
<comment type="catalytic activity">
    <reaction evidence="1">
        <text>RNA(n) + a ribonucleoside 5'-triphosphate = RNA(n+1) + diphosphate</text>
        <dbReference type="Rhea" id="RHEA:21248"/>
        <dbReference type="Rhea" id="RHEA-COMP:14527"/>
        <dbReference type="Rhea" id="RHEA-COMP:17342"/>
        <dbReference type="ChEBI" id="CHEBI:33019"/>
        <dbReference type="ChEBI" id="CHEBI:61557"/>
        <dbReference type="ChEBI" id="CHEBI:140395"/>
        <dbReference type="EC" id="2.7.7.6"/>
    </reaction>
</comment>
<comment type="subunit">
    <text evidence="1">In plastids the minimal PEP RNA polymerase catalytic core is composed of four subunits: alpha, beta, beta', and beta''. When a (nuclear-encoded) sigma factor is associated with the core the holoenzyme is formed, which can initiate transcription.</text>
</comment>
<comment type="subcellular location">
    <subcellularLocation>
        <location>Plastid</location>
        <location>Chloroplast</location>
    </subcellularLocation>
</comment>
<comment type="similarity">
    <text evidence="1">Belongs to the RNA polymerase beta chain family.</text>
</comment>
<organism>
    <name type="scientific">Lolium perenne</name>
    <name type="common">Perennial ryegrass</name>
    <dbReference type="NCBI Taxonomy" id="4522"/>
    <lineage>
        <taxon>Eukaryota</taxon>
        <taxon>Viridiplantae</taxon>
        <taxon>Streptophyta</taxon>
        <taxon>Embryophyta</taxon>
        <taxon>Tracheophyta</taxon>
        <taxon>Spermatophyta</taxon>
        <taxon>Magnoliopsida</taxon>
        <taxon>Liliopsida</taxon>
        <taxon>Poales</taxon>
        <taxon>Poaceae</taxon>
        <taxon>BOP clade</taxon>
        <taxon>Pooideae</taxon>
        <taxon>Poodae</taxon>
        <taxon>Poeae</taxon>
        <taxon>Poeae Chloroplast Group 2 (Poeae type)</taxon>
        <taxon>Loliodinae</taxon>
        <taxon>Loliinae</taxon>
        <taxon>Lolium</taxon>
    </lineage>
</organism>
<gene>
    <name evidence="1" type="primary">rpoB</name>
    <name type="ordered locus">LopeCp023</name>
</gene>
<proteinExistence type="inferred from homology"/>
<dbReference type="EC" id="2.7.7.6" evidence="1"/>
<dbReference type="EMBL" id="AM777385">
    <property type="protein sequence ID" value="CAO85966.1"/>
    <property type="molecule type" value="Genomic_DNA"/>
</dbReference>
<dbReference type="RefSeq" id="YP_001531273.1">
    <property type="nucleotide sequence ID" value="NC_009950.1"/>
</dbReference>
<dbReference type="SMR" id="A8Y9G0"/>
<dbReference type="GeneID" id="5696586"/>
<dbReference type="KEGG" id="lper:5696586"/>
<dbReference type="GO" id="GO:0009507">
    <property type="term" value="C:chloroplast"/>
    <property type="evidence" value="ECO:0007669"/>
    <property type="project" value="UniProtKB-SubCell"/>
</dbReference>
<dbReference type="GO" id="GO:0000428">
    <property type="term" value="C:DNA-directed RNA polymerase complex"/>
    <property type="evidence" value="ECO:0007669"/>
    <property type="project" value="UniProtKB-KW"/>
</dbReference>
<dbReference type="GO" id="GO:0005739">
    <property type="term" value="C:mitochondrion"/>
    <property type="evidence" value="ECO:0007669"/>
    <property type="project" value="GOC"/>
</dbReference>
<dbReference type="GO" id="GO:0003677">
    <property type="term" value="F:DNA binding"/>
    <property type="evidence" value="ECO:0007669"/>
    <property type="project" value="UniProtKB-UniRule"/>
</dbReference>
<dbReference type="GO" id="GO:0003899">
    <property type="term" value="F:DNA-directed RNA polymerase activity"/>
    <property type="evidence" value="ECO:0007669"/>
    <property type="project" value="UniProtKB-UniRule"/>
</dbReference>
<dbReference type="GO" id="GO:0032549">
    <property type="term" value="F:ribonucleoside binding"/>
    <property type="evidence" value="ECO:0007669"/>
    <property type="project" value="InterPro"/>
</dbReference>
<dbReference type="GO" id="GO:0006351">
    <property type="term" value="P:DNA-templated transcription"/>
    <property type="evidence" value="ECO:0007669"/>
    <property type="project" value="UniProtKB-UniRule"/>
</dbReference>
<dbReference type="CDD" id="cd00653">
    <property type="entry name" value="RNA_pol_B_RPB2"/>
    <property type="match status" value="1"/>
</dbReference>
<dbReference type="Gene3D" id="2.40.50.100">
    <property type="match status" value="1"/>
</dbReference>
<dbReference type="Gene3D" id="2.40.50.150">
    <property type="match status" value="1"/>
</dbReference>
<dbReference type="Gene3D" id="3.90.1100.10">
    <property type="match status" value="1"/>
</dbReference>
<dbReference type="Gene3D" id="2.30.150.10">
    <property type="entry name" value="DNA-directed RNA polymerase, beta subunit, external 1 domain"/>
    <property type="match status" value="1"/>
</dbReference>
<dbReference type="Gene3D" id="2.40.270.10">
    <property type="entry name" value="DNA-directed RNA polymerase, subunit 2, domain 6"/>
    <property type="match status" value="2"/>
</dbReference>
<dbReference type="Gene3D" id="3.90.1800.10">
    <property type="entry name" value="RNA polymerase alpha subunit dimerisation domain"/>
    <property type="match status" value="1"/>
</dbReference>
<dbReference type="Gene3D" id="3.90.1110.10">
    <property type="entry name" value="RNA polymerase Rpb2, domain 2"/>
    <property type="match status" value="1"/>
</dbReference>
<dbReference type="HAMAP" id="MF_01321">
    <property type="entry name" value="RNApol_bact_RpoB"/>
    <property type="match status" value="1"/>
</dbReference>
<dbReference type="InterPro" id="IPR042107">
    <property type="entry name" value="DNA-dir_RNA_pol_bsu_ext_1_sf"/>
</dbReference>
<dbReference type="InterPro" id="IPR015712">
    <property type="entry name" value="DNA-dir_RNA_pol_su2"/>
</dbReference>
<dbReference type="InterPro" id="IPR007120">
    <property type="entry name" value="DNA-dir_RNAP_su2_dom"/>
</dbReference>
<dbReference type="InterPro" id="IPR037033">
    <property type="entry name" value="DNA-dir_RNAP_su2_hyb_sf"/>
</dbReference>
<dbReference type="InterPro" id="IPR010243">
    <property type="entry name" value="RNA_pol_bsu_bac"/>
</dbReference>
<dbReference type="InterPro" id="IPR007121">
    <property type="entry name" value="RNA_pol_bsu_CS"/>
</dbReference>
<dbReference type="InterPro" id="IPR007642">
    <property type="entry name" value="RNA_pol_Rpb2_2"/>
</dbReference>
<dbReference type="InterPro" id="IPR037034">
    <property type="entry name" value="RNA_pol_Rpb2_2_sf"/>
</dbReference>
<dbReference type="InterPro" id="IPR007645">
    <property type="entry name" value="RNA_pol_Rpb2_3"/>
</dbReference>
<dbReference type="InterPro" id="IPR007641">
    <property type="entry name" value="RNA_pol_Rpb2_7"/>
</dbReference>
<dbReference type="InterPro" id="IPR014724">
    <property type="entry name" value="RNA_pol_RPB2_OB-fold"/>
</dbReference>
<dbReference type="NCBIfam" id="NF001616">
    <property type="entry name" value="PRK00405.1"/>
    <property type="match status" value="1"/>
</dbReference>
<dbReference type="PANTHER" id="PTHR20856">
    <property type="entry name" value="DNA-DIRECTED RNA POLYMERASE I SUBUNIT 2"/>
    <property type="match status" value="1"/>
</dbReference>
<dbReference type="Pfam" id="PF04561">
    <property type="entry name" value="RNA_pol_Rpb2_2"/>
    <property type="match status" value="1"/>
</dbReference>
<dbReference type="Pfam" id="PF04565">
    <property type="entry name" value="RNA_pol_Rpb2_3"/>
    <property type="match status" value="1"/>
</dbReference>
<dbReference type="Pfam" id="PF00562">
    <property type="entry name" value="RNA_pol_Rpb2_6"/>
    <property type="match status" value="1"/>
</dbReference>
<dbReference type="Pfam" id="PF04560">
    <property type="entry name" value="RNA_pol_Rpb2_7"/>
    <property type="match status" value="1"/>
</dbReference>
<dbReference type="SUPFAM" id="SSF64484">
    <property type="entry name" value="beta and beta-prime subunits of DNA dependent RNA-polymerase"/>
    <property type="match status" value="1"/>
</dbReference>
<dbReference type="PROSITE" id="PS01166">
    <property type="entry name" value="RNA_POL_BETA"/>
    <property type="match status" value="1"/>
</dbReference>
<sequence length="1076" mass="121441">MLRNGNEGMSTIPGFSQIQFEGFCRFINQALAEELNKFPAIKDPDHEIAFQLFAKGYQLLEPSIKERDAVYESLTYSSELYVSARLIFGFDVQKQTISIGNIPIMNSLGTFIINGIYRIVINQILLSPGIYYRSELDHKGISIYTGTIISDWGGRSELAIDKKERIWARVSRKQKISILVLSSAMGSNLREILDNVSYPEIFLSFPNAKEKKRIESKEKAILEFYQQFACVGGDLVFSESLCEELQKKFFQQKCELGRIGRRNMNRRLNLDIPQNNTFLLPRDVLAATDHLIGMKFGTGILDDDDMNHLKNKRIRSVADLLQDQFGLALGRLQHAVQKTIRRVFIRQSKPTPQTLVTPTSTSILLITTYETFFGTYPLSQVFDQTNPLTQTVHGRKVSCLGPGGLTGRTSSFRSRDIHPSHYGRICPIDTSEGINVGLTGSLAIHARINHLWGSIESPFYEISAEKAKKKKSRQVVYLSPNRDEYYMIAAGNSLSLNQGIQEEQVVPARYRQEFLTIAWEQIHVRSIFPFQYFSIGGSLIPFIEHNDANRALMSSNMQRQAVPLSRSEKCIVGTGLERQTALDSGVSVIAEREGKILSTDSHKILLSSSGKTLSIPLVNHRRSNKNNCMHQKSRVPRGKSIKKGQILAEGAATVGGELALGKNVLVAYMPWEGYNFEDAVLISERLVYEDIYTSFHIRKYEIQTDTTSQGSAEKITKEIPHLEAHLLRNLDRNGVVRLGSWVETSDILVGKLTPQIASESSYIAEAGLLRAIFGLEVSTSKETSLKLPIGGRGRVIDVKWIQRDPLDIMVRVYILQKREIKVGDKVAGRHGNKGIISKILPRQDMPYLQDGTPVDMVFNPLGVPSRMNVGQIFESSLGLAGDLLKKHYRIAPFDERYEQEASRKLVFSELYEASKETKNPWVFEPEYPGKSRIFDGRTGDPFEQPVLIGKSYILKLIHQVDEKIHGRSTGPYSLVTQQPVRGRAKQGGQRVGEMEVWALEGFGVAHILQEILTYKSDHLIARQEILNATIWGKRIPNHEDPPESFRVLVRELRSLALELNHFLVSEKNFQVTREEV</sequence>
<evidence type="ECO:0000255" key="1">
    <source>
        <dbReference type="HAMAP-Rule" id="MF_01321"/>
    </source>
</evidence>
<feature type="chain" id="PRO_0000329202" description="DNA-directed RNA polymerase subunit beta">
    <location>
        <begin position="1"/>
        <end position="1076"/>
    </location>
</feature>
<name>RPOB_LOLPR</name>
<reference key="1">
    <citation type="journal article" date="2008" name="PLoS ONE">
        <title>An optimized chloroplast DNA extraction protocol for grasses (Poaceae) proves suitable for whole plastid genome sequencing and SNP detection.</title>
        <authorList>
            <person name="Diekmann K."/>
            <person name="Hodkinson T.R."/>
            <person name="Fricke E."/>
            <person name="Barth S."/>
        </authorList>
    </citation>
    <scope>NUCLEOTIDE SEQUENCE [LARGE SCALE GENOMIC DNA]</scope>
    <source>
        <strain>cv. Cashel</strain>
    </source>
</reference>
<protein>
    <recommendedName>
        <fullName evidence="1">DNA-directed RNA polymerase subunit beta</fullName>
        <ecNumber evidence="1">2.7.7.6</ecNumber>
    </recommendedName>
    <alternativeName>
        <fullName evidence="1">PEP</fullName>
    </alternativeName>
    <alternativeName>
        <fullName evidence="1">Plastid-encoded RNA polymerase subunit beta</fullName>
        <shortName evidence="1">RNA polymerase subunit beta</shortName>
    </alternativeName>
</protein>
<geneLocation type="chloroplast"/>